<proteinExistence type="inferred from homology"/>
<protein>
    <recommendedName>
        <fullName evidence="1">Methylenetetrahydrofolate--tRNA-(uracil-5-)-methyltransferase TrmFO</fullName>
        <ecNumber evidence="1">2.1.1.74</ecNumber>
    </recommendedName>
    <alternativeName>
        <fullName evidence="1">Folate-dependent tRNA (uracil-5-)-methyltransferase</fullName>
    </alternativeName>
    <alternativeName>
        <fullName evidence="1">Folate-dependent tRNA(M-5-U54)-methyltransferase</fullName>
    </alternativeName>
</protein>
<name>TRMFO_AZOC5</name>
<reference key="1">
    <citation type="submission" date="2007-04" db="EMBL/GenBank/DDBJ databases">
        <title>Complete genome sequence of the nitrogen-fixing bacterium Azorhizobium caulinodans ORS571.</title>
        <authorList>
            <person name="Lee K.B."/>
            <person name="Backer P.D."/>
            <person name="Aono T."/>
            <person name="Liu C.T."/>
            <person name="Suzuki S."/>
            <person name="Suzuki T."/>
            <person name="Kaneko T."/>
            <person name="Yamada M."/>
            <person name="Tabata S."/>
            <person name="Kupfer D.M."/>
            <person name="Najar F.Z."/>
            <person name="Wiley G.B."/>
            <person name="Roe B."/>
            <person name="Binnewies T."/>
            <person name="Ussery D."/>
            <person name="Vereecke D."/>
            <person name="Gevers D."/>
            <person name="Holsters M."/>
            <person name="Oyaizu H."/>
        </authorList>
    </citation>
    <scope>NUCLEOTIDE SEQUENCE [LARGE SCALE GENOMIC DNA]</scope>
    <source>
        <strain>ATCC 43989 / DSM 5975 / JCM 20966 / LMG 6465 / NBRC 14845 / NCIMB 13405 / ORS 571</strain>
    </source>
</reference>
<dbReference type="EC" id="2.1.1.74" evidence="1"/>
<dbReference type="EMBL" id="AP009384">
    <property type="protein sequence ID" value="BAF88887.1"/>
    <property type="molecule type" value="Genomic_DNA"/>
</dbReference>
<dbReference type="RefSeq" id="WP_012171413.1">
    <property type="nucleotide sequence ID" value="NC_009937.1"/>
</dbReference>
<dbReference type="SMR" id="A8ID68"/>
<dbReference type="STRING" id="438753.AZC_2889"/>
<dbReference type="KEGG" id="azc:AZC_2889"/>
<dbReference type="eggNOG" id="COG1206">
    <property type="taxonomic scope" value="Bacteria"/>
</dbReference>
<dbReference type="HOGENOM" id="CLU_033057_1_0_5"/>
<dbReference type="Proteomes" id="UP000000270">
    <property type="component" value="Chromosome"/>
</dbReference>
<dbReference type="GO" id="GO:0005829">
    <property type="term" value="C:cytosol"/>
    <property type="evidence" value="ECO:0007669"/>
    <property type="project" value="TreeGrafter"/>
</dbReference>
<dbReference type="GO" id="GO:0050660">
    <property type="term" value="F:flavin adenine dinucleotide binding"/>
    <property type="evidence" value="ECO:0007669"/>
    <property type="project" value="UniProtKB-UniRule"/>
</dbReference>
<dbReference type="GO" id="GO:0047151">
    <property type="term" value="F:tRNA (uracil(54)-C5)-methyltransferase activity, 5,10-methylenetetrahydrofolate-dependent"/>
    <property type="evidence" value="ECO:0007669"/>
    <property type="project" value="UniProtKB-UniRule"/>
</dbReference>
<dbReference type="GO" id="GO:0030488">
    <property type="term" value="P:tRNA methylation"/>
    <property type="evidence" value="ECO:0007669"/>
    <property type="project" value="TreeGrafter"/>
</dbReference>
<dbReference type="GO" id="GO:0002098">
    <property type="term" value="P:tRNA wobble uridine modification"/>
    <property type="evidence" value="ECO:0007669"/>
    <property type="project" value="TreeGrafter"/>
</dbReference>
<dbReference type="Gene3D" id="3.50.50.60">
    <property type="entry name" value="FAD/NAD(P)-binding domain"/>
    <property type="match status" value="2"/>
</dbReference>
<dbReference type="HAMAP" id="MF_01037">
    <property type="entry name" value="TrmFO"/>
    <property type="match status" value="1"/>
</dbReference>
<dbReference type="InterPro" id="IPR036188">
    <property type="entry name" value="FAD/NAD-bd_sf"/>
</dbReference>
<dbReference type="InterPro" id="IPR002218">
    <property type="entry name" value="MnmG-rel"/>
</dbReference>
<dbReference type="InterPro" id="IPR020595">
    <property type="entry name" value="MnmG-rel_CS"/>
</dbReference>
<dbReference type="InterPro" id="IPR040131">
    <property type="entry name" value="MnmG_N"/>
</dbReference>
<dbReference type="InterPro" id="IPR004417">
    <property type="entry name" value="TrmFO"/>
</dbReference>
<dbReference type="NCBIfam" id="TIGR00137">
    <property type="entry name" value="gid_trmFO"/>
    <property type="match status" value="1"/>
</dbReference>
<dbReference type="NCBIfam" id="NF003739">
    <property type="entry name" value="PRK05335.1"/>
    <property type="match status" value="1"/>
</dbReference>
<dbReference type="PANTHER" id="PTHR11806">
    <property type="entry name" value="GLUCOSE INHIBITED DIVISION PROTEIN A"/>
    <property type="match status" value="1"/>
</dbReference>
<dbReference type="PANTHER" id="PTHR11806:SF2">
    <property type="entry name" value="METHYLENETETRAHYDROFOLATE--TRNA-(URACIL-5-)-METHYLTRANSFERASE TRMFO"/>
    <property type="match status" value="1"/>
</dbReference>
<dbReference type="Pfam" id="PF01134">
    <property type="entry name" value="GIDA"/>
    <property type="match status" value="1"/>
</dbReference>
<dbReference type="SUPFAM" id="SSF51905">
    <property type="entry name" value="FAD/NAD(P)-binding domain"/>
    <property type="match status" value="1"/>
</dbReference>
<dbReference type="PROSITE" id="PS01281">
    <property type="entry name" value="GIDA_2"/>
    <property type="match status" value="1"/>
</dbReference>
<keyword id="KW-0963">Cytoplasm</keyword>
<keyword id="KW-0274">FAD</keyword>
<keyword id="KW-0285">Flavoprotein</keyword>
<keyword id="KW-0489">Methyltransferase</keyword>
<keyword id="KW-0520">NAD</keyword>
<keyword id="KW-0521">NADP</keyword>
<keyword id="KW-1185">Reference proteome</keyword>
<keyword id="KW-0808">Transferase</keyword>
<keyword id="KW-0819">tRNA processing</keyword>
<gene>
    <name evidence="1" type="primary">trmFO</name>
    <name type="ordered locus">AZC_2889</name>
</gene>
<organism>
    <name type="scientific">Azorhizobium caulinodans (strain ATCC 43989 / DSM 5975 / JCM 20966 / LMG 6465 / NBRC 14845 / NCIMB 13405 / ORS 571)</name>
    <dbReference type="NCBI Taxonomy" id="438753"/>
    <lineage>
        <taxon>Bacteria</taxon>
        <taxon>Pseudomonadati</taxon>
        <taxon>Pseudomonadota</taxon>
        <taxon>Alphaproteobacteria</taxon>
        <taxon>Hyphomicrobiales</taxon>
        <taxon>Xanthobacteraceae</taxon>
        <taxon>Azorhizobium</taxon>
    </lineage>
</organism>
<accession>A8ID68</accession>
<feature type="chain" id="PRO_0000346319" description="Methylenetetrahydrofolate--tRNA-(uracil-5-)-methyltransferase TrmFO">
    <location>
        <begin position="1"/>
        <end position="471"/>
    </location>
</feature>
<feature type="binding site" evidence="1">
    <location>
        <begin position="13"/>
        <end position="18"/>
    </location>
    <ligand>
        <name>FAD</name>
        <dbReference type="ChEBI" id="CHEBI:57692"/>
    </ligand>
</feature>
<comment type="function">
    <text evidence="1">Catalyzes the folate-dependent formation of 5-methyl-uridine at position 54 (M-5-U54) in all tRNAs.</text>
</comment>
<comment type="catalytic activity">
    <reaction evidence="1">
        <text>uridine(54) in tRNA + (6R)-5,10-methylene-5,6,7,8-tetrahydrofolate + NADH + H(+) = 5-methyluridine(54) in tRNA + (6S)-5,6,7,8-tetrahydrofolate + NAD(+)</text>
        <dbReference type="Rhea" id="RHEA:16873"/>
        <dbReference type="Rhea" id="RHEA-COMP:10167"/>
        <dbReference type="Rhea" id="RHEA-COMP:10193"/>
        <dbReference type="ChEBI" id="CHEBI:15378"/>
        <dbReference type="ChEBI" id="CHEBI:15636"/>
        <dbReference type="ChEBI" id="CHEBI:57453"/>
        <dbReference type="ChEBI" id="CHEBI:57540"/>
        <dbReference type="ChEBI" id="CHEBI:57945"/>
        <dbReference type="ChEBI" id="CHEBI:65315"/>
        <dbReference type="ChEBI" id="CHEBI:74447"/>
        <dbReference type="EC" id="2.1.1.74"/>
    </reaction>
</comment>
<comment type="catalytic activity">
    <reaction evidence="1">
        <text>uridine(54) in tRNA + (6R)-5,10-methylene-5,6,7,8-tetrahydrofolate + NADPH + H(+) = 5-methyluridine(54) in tRNA + (6S)-5,6,7,8-tetrahydrofolate + NADP(+)</text>
        <dbReference type="Rhea" id="RHEA:62372"/>
        <dbReference type="Rhea" id="RHEA-COMP:10167"/>
        <dbReference type="Rhea" id="RHEA-COMP:10193"/>
        <dbReference type="ChEBI" id="CHEBI:15378"/>
        <dbReference type="ChEBI" id="CHEBI:15636"/>
        <dbReference type="ChEBI" id="CHEBI:57453"/>
        <dbReference type="ChEBI" id="CHEBI:57783"/>
        <dbReference type="ChEBI" id="CHEBI:58349"/>
        <dbReference type="ChEBI" id="CHEBI:65315"/>
        <dbReference type="ChEBI" id="CHEBI:74447"/>
        <dbReference type="EC" id="2.1.1.74"/>
    </reaction>
</comment>
<comment type="cofactor">
    <cofactor evidence="1">
        <name>FAD</name>
        <dbReference type="ChEBI" id="CHEBI:57692"/>
    </cofactor>
</comment>
<comment type="subcellular location">
    <subcellularLocation>
        <location evidence="1">Cytoplasm</location>
    </subcellularLocation>
</comment>
<comment type="similarity">
    <text evidence="1">Belongs to the MnmG family. TrmFO subfamily.</text>
</comment>
<evidence type="ECO:0000255" key="1">
    <source>
        <dbReference type="HAMAP-Rule" id="MF_01037"/>
    </source>
</evidence>
<sequence length="471" mass="50522">MSQTSLQPVHVVGGGLAGSEAAFQLAERGVPVVLHEMRPVRGTEAHHTDGLAELVCSNSFRSDDAQTNAVGVLHAEMRRAGSLILRCADANQVPAGGALAVDRDGFSQAVTAALAEHPLVEIRREEVTAIPPEEWDNVIIATGPLTSPALAQAVLELTGESALAFFDAIAPIVHLDSIDLSKAWFQSRYDKVGPGGTGADYINCPLDKEQYEAFVDALLASEKVPLRDFEAKTPYFDGCLPIEVMAERGRETLRFGPLKPVGLTNPHNPDVKPHAVIQLRQDNKLGTLYNLVGFQTKMRHGEQVRVFRTIPGLENAEFARLGGLHRNTYLNSPRLLDGTLRLKAAPRLRFAGQITGCEGYVESAAVGLMAGRFAAAERRGEALVPPPATTAHGALLAHITGGHIETVDAGPRSFQPMNVNFGLFPQLDVSPKGADGKRLRGSEKTLAKKRLLAERALSDMSAWLDTPAAAA</sequence>